<proteinExistence type="inferred from homology"/>
<sequence length="150" mass="16766">MKVAIANRQRRHPIGTPRLRKVAERILSALGYPDSELSVVITGDLGIRRVNREYLHKDRPTNVISFAMAEGEFGALNPAMLGDVIISADTAAREAEEGGVSFWSRLCFLLLHGILHITGYDHERSGEAEARRMEAKEREIFAILEREGLV</sequence>
<feature type="chain" id="PRO_0000284213" description="Endoribonuclease YbeY">
    <location>
        <begin position="1"/>
        <end position="150"/>
    </location>
</feature>
<feature type="binding site" evidence="1">
    <location>
        <position position="112"/>
    </location>
    <ligand>
        <name>Zn(2+)</name>
        <dbReference type="ChEBI" id="CHEBI:29105"/>
        <note>catalytic</note>
    </ligand>
</feature>
<feature type="binding site" evidence="1">
    <location>
        <position position="116"/>
    </location>
    <ligand>
        <name>Zn(2+)</name>
        <dbReference type="ChEBI" id="CHEBI:29105"/>
        <note>catalytic</note>
    </ligand>
</feature>
<feature type="binding site" evidence="1">
    <location>
        <position position="122"/>
    </location>
    <ligand>
        <name>Zn(2+)</name>
        <dbReference type="ChEBI" id="CHEBI:29105"/>
        <note>catalytic</note>
    </ligand>
</feature>
<protein>
    <recommendedName>
        <fullName evidence="1">Endoribonuclease YbeY</fullName>
        <ecNumber evidence="1">3.1.-.-</ecNumber>
    </recommendedName>
</protein>
<organism>
    <name type="scientific">Geobacter metallireducens (strain ATCC 53774 / DSM 7210 / GS-15)</name>
    <dbReference type="NCBI Taxonomy" id="269799"/>
    <lineage>
        <taxon>Bacteria</taxon>
        <taxon>Pseudomonadati</taxon>
        <taxon>Thermodesulfobacteriota</taxon>
        <taxon>Desulfuromonadia</taxon>
        <taxon>Geobacterales</taxon>
        <taxon>Geobacteraceae</taxon>
        <taxon>Geobacter</taxon>
    </lineage>
</organism>
<gene>
    <name evidence="1" type="primary">ybeY</name>
    <name type="ordered locus">Gmet_2370</name>
</gene>
<reference key="1">
    <citation type="journal article" date="2009" name="BMC Microbiol.">
        <title>The genome sequence of Geobacter metallireducens: features of metabolism, physiology and regulation common and dissimilar to Geobacter sulfurreducens.</title>
        <authorList>
            <person name="Aklujkar M."/>
            <person name="Krushkal J."/>
            <person name="DiBartolo G."/>
            <person name="Lapidus A."/>
            <person name="Land M.L."/>
            <person name="Lovley D.R."/>
        </authorList>
    </citation>
    <scope>NUCLEOTIDE SEQUENCE [LARGE SCALE GENOMIC DNA]</scope>
    <source>
        <strain>ATCC 53774 / DSM 7210 / GS-15</strain>
    </source>
</reference>
<dbReference type="EC" id="3.1.-.-" evidence="1"/>
<dbReference type="EMBL" id="CP000148">
    <property type="protein sequence ID" value="ABB32595.1"/>
    <property type="molecule type" value="Genomic_DNA"/>
</dbReference>
<dbReference type="RefSeq" id="WP_011366044.1">
    <property type="nucleotide sequence ID" value="NC_007517.1"/>
</dbReference>
<dbReference type="SMR" id="Q39T29"/>
<dbReference type="STRING" id="269799.Gmet_2370"/>
<dbReference type="KEGG" id="gme:Gmet_2370"/>
<dbReference type="eggNOG" id="COG0319">
    <property type="taxonomic scope" value="Bacteria"/>
</dbReference>
<dbReference type="HOGENOM" id="CLU_106710_3_3_7"/>
<dbReference type="Proteomes" id="UP000007073">
    <property type="component" value="Chromosome"/>
</dbReference>
<dbReference type="GO" id="GO:0005737">
    <property type="term" value="C:cytoplasm"/>
    <property type="evidence" value="ECO:0007669"/>
    <property type="project" value="UniProtKB-SubCell"/>
</dbReference>
<dbReference type="GO" id="GO:0004222">
    <property type="term" value="F:metalloendopeptidase activity"/>
    <property type="evidence" value="ECO:0007669"/>
    <property type="project" value="InterPro"/>
</dbReference>
<dbReference type="GO" id="GO:0004521">
    <property type="term" value="F:RNA endonuclease activity"/>
    <property type="evidence" value="ECO:0007669"/>
    <property type="project" value="UniProtKB-UniRule"/>
</dbReference>
<dbReference type="GO" id="GO:0008270">
    <property type="term" value="F:zinc ion binding"/>
    <property type="evidence" value="ECO:0007669"/>
    <property type="project" value="UniProtKB-UniRule"/>
</dbReference>
<dbReference type="GO" id="GO:0006364">
    <property type="term" value="P:rRNA processing"/>
    <property type="evidence" value="ECO:0007669"/>
    <property type="project" value="UniProtKB-UniRule"/>
</dbReference>
<dbReference type="Gene3D" id="3.40.390.30">
    <property type="entry name" value="Metalloproteases ('zincins'), catalytic domain"/>
    <property type="match status" value="1"/>
</dbReference>
<dbReference type="HAMAP" id="MF_00009">
    <property type="entry name" value="Endoribonucl_YbeY"/>
    <property type="match status" value="1"/>
</dbReference>
<dbReference type="InterPro" id="IPR023091">
    <property type="entry name" value="MetalPrtase_cat_dom_sf_prd"/>
</dbReference>
<dbReference type="InterPro" id="IPR002036">
    <property type="entry name" value="YbeY"/>
</dbReference>
<dbReference type="NCBIfam" id="TIGR00043">
    <property type="entry name" value="rRNA maturation RNase YbeY"/>
    <property type="match status" value="1"/>
</dbReference>
<dbReference type="PANTHER" id="PTHR46986">
    <property type="entry name" value="ENDORIBONUCLEASE YBEY, CHLOROPLASTIC"/>
    <property type="match status" value="1"/>
</dbReference>
<dbReference type="PANTHER" id="PTHR46986:SF1">
    <property type="entry name" value="ENDORIBONUCLEASE YBEY, CHLOROPLASTIC"/>
    <property type="match status" value="1"/>
</dbReference>
<dbReference type="Pfam" id="PF02130">
    <property type="entry name" value="YbeY"/>
    <property type="match status" value="1"/>
</dbReference>
<dbReference type="SUPFAM" id="SSF55486">
    <property type="entry name" value="Metalloproteases ('zincins'), catalytic domain"/>
    <property type="match status" value="1"/>
</dbReference>
<evidence type="ECO:0000255" key="1">
    <source>
        <dbReference type="HAMAP-Rule" id="MF_00009"/>
    </source>
</evidence>
<name>YBEY_GEOMG</name>
<keyword id="KW-0963">Cytoplasm</keyword>
<keyword id="KW-0255">Endonuclease</keyword>
<keyword id="KW-0378">Hydrolase</keyword>
<keyword id="KW-0479">Metal-binding</keyword>
<keyword id="KW-0540">Nuclease</keyword>
<keyword id="KW-1185">Reference proteome</keyword>
<keyword id="KW-0690">Ribosome biogenesis</keyword>
<keyword id="KW-0698">rRNA processing</keyword>
<keyword id="KW-0862">Zinc</keyword>
<accession>Q39T29</accession>
<comment type="function">
    <text evidence="1">Single strand-specific metallo-endoribonuclease involved in late-stage 70S ribosome quality control and in maturation of the 3' terminus of the 16S rRNA.</text>
</comment>
<comment type="cofactor">
    <cofactor evidence="1">
        <name>Zn(2+)</name>
        <dbReference type="ChEBI" id="CHEBI:29105"/>
    </cofactor>
    <text evidence="1">Binds 1 zinc ion.</text>
</comment>
<comment type="subcellular location">
    <subcellularLocation>
        <location evidence="1">Cytoplasm</location>
    </subcellularLocation>
</comment>
<comment type="similarity">
    <text evidence="1">Belongs to the endoribonuclease YbeY family.</text>
</comment>